<gene>
    <name evidence="1" type="primary">rsmH</name>
    <name type="synonym">mraW</name>
    <name type="ordered locus">AM605</name>
</gene>
<accession>Q5PAS3</accession>
<sequence>MVHKPVLLNEVVEALSPKDGSVYVDATFGGGGYSRRILETAQCVVYAIDQDVVVKKYFDELLQSFPGRLNLAISRFSKLREVVLSFGVDKVDGVVFDLGTSAMQLADASRGFSFMNSGSLDMRMCSSALRDAAMFVNTVPEKEMADVIYQYGGERYSRRVARAIIDARRKCRINNTGDLATIIRSAVPRSRVHPIDPATRTFQAIRIWVNNELEELQAGLETAAEVLKIGGKILVTSFHSLEDRVVKHKFRSLCDMGFSLINKKAIMPTDEEVKNNPRSRSGKLRAIARVE</sequence>
<name>RSMH_ANAMM</name>
<organism>
    <name type="scientific">Anaplasma marginale (strain St. Maries)</name>
    <dbReference type="NCBI Taxonomy" id="234826"/>
    <lineage>
        <taxon>Bacteria</taxon>
        <taxon>Pseudomonadati</taxon>
        <taxon>Pseudomonadota</taxon>
        <taxon>Alphaproteobacteria</taxon>
        <taxon>Rickettsiales</taxon>
        <taxon>Anaplasmataceae</taxon>
        <taxon>Anaplasma</taxon>
    </lineage>
</organism>
<protein>
    <recommendedName>
        <fullName evidence="1">Ribosomal RNA small subunit methyltransferase H</fullName>
        <ecNumber evidence="1">2.1.1.199</ecNumber>
    </recommendedName>
    <alternativeName>
        <fullName evidence="1">16S rRNA m(4)C1402 methyltransferase</fullName>
    </alternativeName>
    <alternativeName>
        <fullName evidence="1">rRNA (cytosine-N(4)-)-methyltransferase RsmH</fullName>
    </alternativeName>
</protein>
<comment type="function">
    <text evidence="1">Specifically methylates the N4 position of cytidine in position 1402 (C1402) of 16S rRNA.</text>
</comment>
<comment type="catalytic activity">
    <reaction evidence="1">
        <text>cytidine(1402) in 16S rRNA + S-adenosyl-L-methionine = N(4)-methylcytidine(1402) in 16S rRNA + S-adenosyl-L-homocysteine + H(+)</text>
        <dbReference type="Rhea" id="RHEA:42928"/>
        <dbReference type="Rhea" id="RHEA-COMP:10286"/>
        <dbReference type="Rhea" id="RHEA-COMP:10287"/>
        <dbReference type="ChEBI" id="CHEBI:15378"/>
        <dbReference type="ChEBI" id="CHEBI:57856"/>
        <dbReference type="ChEBI" id="CHEBI:59789"/>
        <dbReference type="ChEBI" id="CHEBI:74506"/>
        <dbReference type="ChEBI" id="CHEBI:82748"/>
        <dbReference type="EC" id="2.1.1.199"/>
    </reaction>
</comment>
<comment type="subcellular location">
    <subcellularLocation>
        <location evidence="1">Cytoplasm</location>
    </subcellularLocation>
</comment>
<comment type="similarity">
    <text evidence="1">Belongs to the methyltransferase superfamily. RsmH family.</text>
</comment>
<keyword id="KW-0963">Cytoplasm</keyword>
<keyword id="KW-0489">Methyltransferase</keyword>
<keyword id="KW-0698">rRNA processing</keyword>
<keyword id="KW-0949">S-adenosyl-L-methionine</keyword>
<keyword id="KW-0808">Transferase</keyword>
<dbReference type="EC" id="2.1.1.199" evidence="1"/>
<dbReference type="EMBL" id="CP000030">
    <property type="protein sequence ID" value="AAV86607.1"/>
    <property type="molecule type" value="Genomic_DNA"/>
</dbReference>
<dbReference type="RefSeq" id="WP_011114359.1">
    <property type="nucleotide sequence ID" value="NC_004842.2"/>
</dbReference>
<dbReference type="SMR" id="Q5PAS3"/>
<dbReference type="KEGG" id="ama:AM605"/>
<dbReference type="HOGENOM" id="CLU_038422_1_1_5"/>
<dbReference type="GO" id="GO:0005737">
    <property type="term" value="C:cytoplasm"/>
    <property type="evidence" value="ECO:0007669"/>
    <property type="project" value="UniProtKB-SubCell"/>
</dbReference>
<dbReference type="GO" id="GO:0071424">
    <property type="term" value="F:rRNA (cytosine-N4-)-methyltransferase activity"/>
    <property type="evidence" value="ECO:0007669"/>
    <property type="project" value="UniProtKB-UniRule"/>
</dbReference>
<dbReference type="GO" id="GO:0070475">
    <property type="term" value="P:rRNA base methylation"/>
    <property type="evidence" value="ECO:0007669"/>
    <property type="project" value="UniProtKB-UniRule"/>
</dbReference>
<dbReference type="Gene3D" id="1.10.150.170">
    <property type="entry name" value="Putative methyltransferase TM0872, insert domain"/>
    <property type="match status" value="1"/>
</dbReference>
<dbReference type="Gene3D" id="3.40.50.150">
    <property type="entry name" value="Vaccinia Virus protein VP39"/>
    <property type="match status" value="1"/>
</dbReference>
<dbReference type="HAMAP" id="MF_01007">
    <property type="entry name" value="16SrRNA_methyltr_H"/>
    <property type="match status" value="1"/>
</dbReference>
<dbReference type="InterPro" id="IPR002903">
    <property type="entry name" value="RsmH"/>
</dbReference>
<dbReference type="InterPro" id="IPR023397">
    <property type="entry name" value="SAM-dep_MeTrfase_MraW_recog"/>
</dbReference>
<dbReference type="InterPro" id="IPR029063">
    <property type="entry name" value="SAM-dependent_MTases_sf"/>
</dbReference>
<dbReference type="NCBIfam" id="TIGR00006">
    <property type="entry name" value="16S rRNA (cytosine(1402)-N(4))-methyltransferase RsmH"/>
    <property type="match status" value="1"/>
</dbReference>
<dbReference type="PANTHER" id="PTHR11265:SF0">
    <property type="entry name" value="12S RRNA N4-METHYLCYTIDINE METHYLTRANSFERASE"/>
    <property type="match status" value="1"/>
</dbReference>
<dbReference type="PANTHER" id="PTHR11265">
    <property type="entry name" value="S-ADENOSYL-METHYLTRANSFERASE MRAW"/>
    <property type="match status" value="1"/>
</dbReference>
<dbReference type="Pfam" id="PF01795">
    <property type="entry name" value="Methyltransf_5"/>
    <property type="match status" value="1"/>
</dbReference>
<dbReference type="PIRSF" id="PIRSF004486">
    <property type="entry name" value="MraW"/>
    <property type="match status" value="1"/>
</dbReference>
<dbReference type="SUPFAM" id="SSF81799">
    <property type="entry name" value="Putative methyltransferase TM0872, insert domain"/>
    <property type="match status" value="1"/>
</dbReference>
<dbReference type="SUPFAM" id="SSF53335">
    <property type="entry name" value="S-adenosyl-L-methionine-dependent methyltransferases"/>
    <property type="match status" value="1"/>
</dbReference>
<feature type="chain" id="PRO_0000108565" description="Ribosomal RNA small subunit methyltransferase H">
    <location>
        <begin position="1"/>
        <end position="291"/>
    </location>
</feature>
<feature type="binding site" evidence="1">
    <location>
        <begin position="31"/>
        <end position="33"/>
    </location>
    <ligand>
        <name>S-adenosyl-L-methionine</name>
        <dbReference type="ChEBI" id="CHEBI:59789"/>
    </ligand>
</feature>
<feature type="binding site" evidence="1">
    <location>
        <position position="49"/>
    </location>
    <ligand>
        <name>S-adenosyl-L-methionine</name>
        <dbReference type="ChEBI" id="CHEBI:59789"/>
    </ligand>
</feature>
<feature type="binding site" evidence="1">
    <location>
        <position position="76"/>
    </location>
    <ligand>
        <name>S-adenosyl-L-methionine</name>
        <dbReference type="ChEBI" id="CHEBI:59789"/>
    </ligand>
</feature>
<feature type="binding site" evidence="1">
    <location>
        <position position="97"/>
    </location>
    <ligand>
        <name>S-adenosyl-L-methionine</name>
        <dbReference type="ChEBI" id="CHEBI:59789"/>
    </ligand>
</feature>
<feature type="binding site" evidence="1">
    <location>
        <position position="104"/>
    </location>
    <ligand>
        <name>S-adenosyl-L-methionine</name>
        <dbReference type="ChEBI" id="CHEBI:59789"/>
    </ligand>
</feature>
<reference key="1">
    <citation type="journal article" date="2005" name="Proc. Natl. Acad. Sci. U.S.A.">
        <title>Complete genome sequencing of Anaplasma marginale reveals that the surface is skewed to two superfamilies of outer membrane proteins.</title>
        <authorList>
            <person name="Brayton K.A."/>
            <person name="Kappmeyer L.S."/>
            <person name="Herndon D.R."/>
            <person name="Dark M.J."/>
            <person name="Tibbals D.L."/>
            <person name="Palmer G.H."/>
            <person name="McGuire T.C."/>
            <person name="Knowles D.P. Jr."/>
        </authorList>
    </citation>
    <scope>NUCLEOTIDE SEQUENCE [LARGE SCALE GENOMIC DNA]</scope>
    <source>
        <strain>St. Maries</strain>
    </source>
</reference>
<proteinExistence type="inferred from homology"/>
<evidence type="ECO:0000255" key="1">
    <source>
        <dbReference type="HAMAP-Rule" id="MF_01007"/>
    </source>
</evidence>